<keyword id="KW-0106">Calcium</keyword>
<keyword id="KW-0903">Direct protein sequencing</keyword>
<keyword id="KW-1015">Disulfide bond</keyword>
<keyword id="KW-0378">Hydrolase</keyword>
<keyword id="KW-0442">Lipid degradation</keyword>
<keyword id="KW-0443">Lipid metabolism</keyword>
<keyword id="KW-0528">Neurotoxin</keyword>
<keyword id="KW-0638">Presynaptic neurotoxin</keyword>
<keyword id="KW-0964">Secreted</keyword>
<keyword id="KW-0800">Toxin</keyword>
<feature type="chain" id="PRO_0000161630" description="Basic phospholipase A2 T1-1 A chain">
    <location>
        <begin position="1"/>
        <end position="14" status="greater than"/>
    </location>
</feature>
<feature type="non-terminal residue" evidence="6">
    <location>
        <position position="14"/>
    </location>
</feature>
<protein>
    <recommendedName>
        <fullName>Basic phospholipase A2 T1-1 A chain</fullName>
        <shortName>svPLA2</shortName>
        <ecNumber>3.1.1.4</ecNumber>
    </recommendedName>
    <alternativeName>
        <fullName>Phosphatidylcholine 2-acylhydrolase T1-1 A</fullName>
    </alternativeName>
</protein>
<accession>P84475</accession>
<name>PA2BA_BUNCA</name>
<reference evidence="7" key="1">
    <citation type="journal article" date="2003" name="J. Biochem.">
        <title>Isolation, toxicity and amino terminal sequences of three major neurotoxins in the venom of Malayan krait (Bungarus candidus) from Thailand.</title>
        <authorList>
            <person name="Khow O."/>
            <person name="Chanhome L."/>
            <person name="Omori-Satoh T."/>
            <person name="Ogawa Y."/>
            <person name="Yanoshita R."/>
            <person name="Samejima Y."/>
            <person name="Kuch U."/>
            <person name="Mebs D."/>
            <person name="Sitprija V."/>
        </authorList>
    </citation>
    <scope>PROTEIN SEQUENCE</scope>
    <scope>FUNCTION</scope>
    <scope>SUBUNIT</scope>
    <scope>SUBCELLULAR LOCATION</scope>
    <scope>TISSUE SPECIFICITY</scope>
    <scope>TOXIC DOSE</scope>
    <source>
        <tissue evidence="5">Venom</tissue>
    </source>
</reference>
<comment type="function">
    <text evidence="5">Snake venom phospholipase A2 (PLA2) that inhibits neuromuscular transmission by blocking acetylcholine release from the nerve termini and exhibits indirect hemolytic activity against human erythrocytes. PLA2 catalyzes the calcium-dependent hydrolysis of the 2-acyl groups in 3-sn-phosphoglycerides.</text>
</comment>
<comment type="catalytic activity">
    <reaction evidence="1 3 4">
        <text>a 1,2-diacyl-sn-glycero-3-phosphocholine + H2O = a 1-acyl-sn-glycero-3-phosphocholine + a fatty acid + H(+)</text>
        <dbReference type="Rhea" id="RHEA:15801"/>
        <dbReference type="ChEBI" id="CHEBI:15377"/>
        <dbReference type="ChEBI" id="CHEBI:15378"/>
        <dbReference type="ChEBI" id="CHEBI:28868"/>
        <dbReference type="ChEBI" id="CHEBI:57643"/>
        <dbReference type="ChEBI" id="CHEBI:58168"/>
        <dbReference type="EC" id="3.1.1.4"/>
    </reaction>
</comment>
<comment type="cofactor">
    <cofactor evidence="1">
        <name>Ca(2+)</name>
        <dbReference type="ChEBI" id="CHEBI:29108"/>
    </cofactor>
    <text evidence="1">Binds 1 Ca(2+) ion.</text>
</comment>
<comment type="subunit">
    <text evidence="5">Heterodimer; disulfide-linked. The A chains have phospholipase A2 activity and the B chains show homology with the basic protease inhibitors.</text>
</comment>
<comment type="subcellular location">
    <subcellularLocation>
        <location evidence="5">Secreted</location>
    </subcellularLocation>
</comment>
<comment type="tissue specificity">
    <text evidence="5">Expressed by the venom gland.</text>
</comment>
<comment type="toxic dose">
    <text evidence="5">LD(50) is 0.26 mg/kg by intravenous injection in mice.</text>
</comment>
<comment type="similarity">
    <text evidence="2">Belongs to the phospholipase A2 family. Group I subfamily.</text>
</comment>
<organism>
    <name type="scientific">Bungarus candidus</name>
    <name type="common">Malayan krait</name>
    <dbReference type="NCBI Taxonomy" id="92438"/>
    <lineage>
        <taxon>Eukaryota</taxon>
        <taxon>Metazoa</taxon>
        <taxon>Chordata</taxon>
        <taxon>Craniata</taxon>
        <taxon>Vertebrata</taxon>
        <taxon>Euteleostomi</taxon>
        <taxon>Lepidosauria</taxon>
        <taxon>Squamata</taxon>
        <taxon>Bifurcata</taxon>
        <taxon>Unidentata</taxon>
        <taxon>Episquamata</taxon>
        <taxon>Toxicofera</taxon>
        <taxon>Serpentes</taxon>
        <taxon>Colubroidea</taxon>
        <taxon>Elapidae</taxon>
        <taxon>Bungarinae</taxon>
        <taxon>Bungarus</taxon>
    </lineage>
</organism>
<evidence type="ECO:0000250" key="1">
    <source>
        <dbReference type="UniProtKB" id="P00617"/>
    </source>
</evidence>
<evidence type="ECO:0000255" key="2"/>
<evidence type="ECO:0000255" key="3">
    <source>
        <dbReference type="PROSITE-ProRule" id="PRU10035"/>
    </source>
</evidence>
<evidence type="ECO:0000255" key="4">
    <source>
        <dbReference type="PROSITE-ProRule" id="PRU10036"/>
    </source>
</evidence>
<evidence type="ECO:0000269" key="5">
    <source>
    </source>
</evidence>
<evidence type="ECO:0000303" key="6">
    <source>
    </source>
</evidence>
<evidence type="ECO:0000305" key="7"/>
<proteinExistence type="evidence at protein level"/>
<sequence>NLYQFKEMIRYTIP</sequence>
<dbReference type="EC" id="3.1.1.4"/>
<dbReference type="GO" id="GO:0005576">
    <property type="term" value="C:extracellular region"/>
    <property type="evidence" value="ECO:0007669"/>
    <property type="project" value="UniProtKB-SubCell"/>
</dbReference>
<dbReference type="GO" id="GO:0004623">
    <property type="term" value="F:phospholipase A2 activity"/>
    <property type="evidence" value="ECO:0007669"/>
    <property type="project" value="UniProtKB-EC"/>
</dbReference>
<dbReference type="GO" id="GO:0090729">
    <property type="term" value="F:toxin activity"/>
    <property type="evidence" value="ECO:0007669"/>
    <property type="project" value="UniProtKB-KW"/>
</dbReference>
<dbReference type="GO" id="GO:0016042">
    <property type="term" value="P:lipid catabolic process"/>
    <property type="evidence" value="ECO:0007669"/>
    <property type="project" value="UniProtKB-KW"/>
</dbReference>